<reference key="1">
    <citation type="journal article" date="2002" name="Nature">
        <title>Complete genome sequence of the model actinomycete Streptomyces coelicolor A3(2).</title>
        <authorList>
            <person name="Bentley S.D."/>
            <person name="Chater K.F."/>
            <person name="Cerdeno-Tarraga A.-M."/>
            <person name="Challis G.L."/>
            <person name="Thomson N.R."/>
            <person name="James K.D."/>
            <person name="Harris D.E."/>
            <person name="Quail M.A."/>
            <person name="Kieser H."/>
            <person name="Harper D."/>
            <person name="Bateman A."/>
            <person name="Brown S."/>
            <person name="Chandra G."/>
            <person name="Chen C.W."/>
            <person name="Collins M."/>
            <person name="Cronin A."/>
            <person name="Fraser A."/>
            <person name="Goble A."/>
            <person name="Hidalgo J."/>
            <person name="Hornsby T."/>
            <person name="Howarth S."/>
            <person name="Huang C.-H."/>
            <person name="Kieser T."/>
            <person name="Larke L."/>
            <person name="Murphy L.D."/>
            <person name="Oliver K."/>
            <person name="O'Neil S."/>
            <person name="Rabbinowitsch E."/>
            <person name="Rajandream M.A."/>
            <person name="Rutherford K.M."/>
            <person name="Rutter S."/>
            <person name="Seeger K."/>
            <person name="Saunders D."/>
            <person name="Sharp S."/>
            <person name="Squares R."/>
            <person name="Squares S."/>
            <person name="Taylor K."/>
            <person name="Warren T."/>
            <person name="Wietzorrek A."/>
            <person name="Woodward J.R."/>
            <person name="Barrell B.G."/>
            <person name="Parkhill J."/>
            <person name="Hopwood D.A."/>
        </authorList>
    </citation>
    <scope>NUCLEOTIDE SEQUENCE [LARGE SCALE GENOMIC DNA]</scope>
    <source>
        <strain>ATCC BAA-471 / A3(2) / M145</strain>
    </source>
</reference>
<organism>
    <name type="scientific">Streptomyces coelicolor (strain ATCC BAA-471 / A3(2) / M145)</name>
    <dbReference type="NCBI Taxonomy" id="100226"/>
    <lineage>
        <taxon>Bacteria</taxon>
        <taxon>Bacillati</taxon>
        <taxon>Actinomycetota</taxon>
        <taxon>Actinomycetes</taxon>
        <taxon>Kitasatosporales</taxon>
        <taxon>Streptomycetaceae</taxon>
        <taxon>Streptomyces</taxon>
        <taxon>Streptomyces albidoflavus group</taxon>
    </lineage>
</organism>
<comment type="catalytic activity">
    <reaction>
        <text>Release of any N-terminal amino acid, including proline, that is linked to proline, even from a dipeptide or tripeptide.</text>
        <dbReference type="EC" id="3.4.11.9"/>
    </reaction>
</comment>
<comment type="cofactor">
    <cofactor evidence="1">
        <name>Mn(2+)</name>
        <dbReference type="ChEBI" id="CHEBI:29035"/>
    </cofactor>
    <text evidence="1">Binds 2 manganese ions per subunit.</text>
</comment>
<comment type="subunit">
    <text evidence="1">Homodimer.</text>
</comment>
<comment type="similarity">
    <text evidence="3">Belongs to the peptidase M24B family.</text>
</comment>
<evidence type="ECO:0000250" key="1"/>
<evidence type="ECO:0000256" key="2">
    <source>
        <dbReference type="SAM" id="MobiDB-lite"/>
    </source>
</evidence>
<evidence type="ECO:0000305" key="3"/>
<accession>P0A3Z1</accession>
<accession>Q05813</accession>
<keyword id="KW-0031">Aminopeptidase</keyword>
<keyword id="KW-0378">Hydrolase</keyword>
<keyword id="KW-0464">Manganese</keyword>
<keyword id="KW-0479">Metal-binding</keyword>
<keyword id="KW-0482">Metalloprotease</keyword>
<keyword id="KW-0645">Protease</keyword>
<keyword id="KW-1185">Reference proteome</keyword>
<proteinExistence type="inferred from homology"/>
<feature type="initiator methionine" description="Removed" evidence="1">
    <location>
        <position position="1"/>
    </location>
</feature>
<feature type="chain" id="PRO_0000185079" description="Xaa-Pro aminopeptidase 1">
    <location>
        <begin position="2"/>
        <end position="491"/>
    </location>
</feature>
<feature type="region of interest" description="Disordered" evidence="2">
    <location>
        <begin position="1"/>
        <end position="32"/>
    </location>
</feature>
<feature type="binding site" evidence="1">
    <location>
        <position position="308"/>
    </location>
    <ligand>
        <name>Mn(2+)</name>
        <dbReference type="ChEBI" id="CHEBI:29035"/>
        <label>2</label>
    </ligand>
</feature>
<feature type="binding site" evidence="1">
    <location>
        <position position="320"/>
    </location>
    <ligand>
        <name>Mn(2+)</name>
        <dbReference type="ChEBI" id="CHEBI:29035"/>
        <label>1</label>
    </ligand>
</feature>
<feature type="binding site" evidence="1">
    <location>
        <position position="320"/>
    </location>
    <ligand>
        <name>Mn(2+)</name>
        <dbReference type="ChEBI" id="CHEBI:29035"/>
        <label>2</label>
    </ligand>
</feature>
<feature type="binding site" evidence="1">
    <location>
        <position position="403"/>
    </location>
    <ligand>
        <name>Mn(2+)</name>
        <dbReference type="ChEBI" id="CHEBI:29035"/>
        <label>1</label>
    </ligand>
</feature>
<feature type="binding site" evidence="1">
    <location>
        <position position="434"/>
    </location>
    <ligand>
        <name>Mn(2+)</name>
        <dbReference type="ChEBI" id="CHEBI:29035"/>
        <label>1</label>
    </ligand>
</feature>
<feature type="binding site" evidence="1">
    <location>
        <position position="458"/>
    </location>
    <ligand>
        <name>Mn(2+)</name>
        <dbReference type="ChEBI" id="CHEBI:29035"/>
        <label>1</label>
    </ligand>
</feature>
<feature type="binding site" evidence="1">
    <location>
        <position position="458"/>
    </location>
    <ligand>
        <name>Mn(2+)</name>
        <dbReference type="ChEBI" id="CHEBI:29035"/>
        <label>2</label>
    </ligand>
</feature>
<gene>
    <name type="primary">pepPI</name>
    <name type="synonym">pepP</name>
    <name type="ordered locus">SCO3970</name>
    <name type="ORF">SCBAC25E3.07c</name>
</gene>
<sequence length="491" mass="54048">MAEELTPENPAIPETPEETEEPIKQRKNGLYPGVSDELAENMQSGWADTELHDLEPIAQAAETAARRAALSARFPGERLVIPAGNLKTRSNDTEYSFRASVEYAYLTGNQTEDGVLVMEPEGDGHAATIYLLPRSDRENGEFWLDGQGELWVGRRHSLAEAGELYGIPASDVRELAGSLREATGPVRVVRGFDAGIEAALTDKVTAERDEELRVFLSEARLVKDEFEIGELQKAVDSTVRGFEDVVKVLDRAEATSERYIEGTFFLRARVEGNDVGYGSICAAGPHACTLHWVRNDGPVRSGDLLLLDAGVETHTYYTADVTRTLPISGTYSELQKKIYDAVYDAQEAGIAAVRPGAKYRDFHDASQRVLAERLVEWGLVEGPVERVLELGLQRRWTLHGTGHMLGMDVHDCAAARVESYVDGTLEPGMVLTVEPGLYFQADDLTVPEEYRGIGVRIEDDILVTADGNRNLSAGLPRRSDEVEEWMAALKG</sequence>
<name>AMPP1_STRCO</name>
<dbReference type="EC" id="3.4.11.9"/>
<dbReference type="EMBL" id="AL939118">
    <property type="protein sequence ID" value="CAC44694.1"/>
    <property type="molecule type" value="Genomic_DNA"/>
</dbReference>
<dbReference type="RefSeq" id="NP_628153.1">
    <property type="nucleotide sequence ID" value="NC_003888.3"/>
</dbReference>
<dbReference type="RefSeq" id="WP_003974973.1">
    <property type="nucleotide sequence ID" value="NZ_VNID01000003.1"/>
</dbReference>
<dbReference type="SMR" id="P0A3Z1"/>
<dbReference type="STRING" id="100226.gene:17761597"/>
<dbReference type="MEROPS" id="M24.033"/>
<dbReference type="PaxDb" id="100226-SCO3970"/>
<dbReference type="KEGG" id="sco:SCO3970"/>
<dbReference type="PATRIC" id="fig|100226.15.peg.4043"/>
<dbReference type="eggNOG" id="COG0006">
    <property type="taxonomic scope" value="Bacteria"/>
</dbReference>
<dbReference type="HOGENOM" id="CLU_017266_1_0_11"/>
<dbReference type="InParanoid" id="P0A3Z1"/>
<dbReference type="OrthoDB" id="9806388at2"/>
<dbReference type="PhylomeDB" id="P0A3Z1"/>
<dbReference type="Proteomes" id="UP000001973">
    <property type="component" value="Chromosome"/>
</dbReference>
<dbReference type="GO" id="GO:0005829">
    <property type="term" value="C:cytosol"/>
    <property type="evidence" value="ECO:0000318"/>
    <property type="project" value="GO_Central"/>
</dbReference>
<dbReference type="GO" id="GO:0004177">
    <property type="term" value="F:aminopeptidase activity"/>
    <property type="evidence" value="ECO:0000318"/>
    <property type="project" value="GO_Central"/>
</dbReference>
<dbReference type="GO" id="GO:0030145">
    <property type="term" value="F:manganese ion binding"/>
    <property type="evidence" value="ECO:0007669"/>
    <property type="project" value="InterPro"/>
</dbReference>
<dbReference type="GO" id="GO:0070006">
    <property type="term" value="F:metalloaminopeptidase activity"/>
    <property type="evidence" value="ECO:0007669"/>
    <property type="project" value="InterPro"/>
</dbReference>
<dbReference type="GO" id="GO:0006508">
    <property type="term" value="P:proteolysis"/>
    <property type="evidence" value="ECO:0000318"/>
    <property type="project" value="GO_Central"/>
</dbReference>
<dbReference type="CDD" id="cd01087">
    <property type="entry name" value="Prolidase"/>
    <property type="match status" value="1"/>
</dbReference>
<dbReference type="Gene3D" id="3.90.230.10">
    <property type="entry name" value="Creatinase/methionine aminopeptidase superfamily"/>
    <property type="match status" value="1"/>
</dbReference>
<dbReference type="Gene3D" id="3.40.350.10">
    <property type="entry name" value="Creatinase/prolidase N-terminal domain"/>
    <property type="match status" value="1"/>
</dbReference>
<dbReference type="InterPro" id="IPR007865">
    <property type="entry name" value="Aminopep_P_N"/>
</dbReference>
<dbReference type="InterPro" id="IPR029149">
    <property type="entry name" value="Creatin/AminoP/Spt16_N"/>
</dbReference>
<dbReference type="InterPro" id="IPR036005">
    <property type="entry name" value="Creatinase/aminopeptidase-like"/>
</dbReference>
<dbReference type="InterPro" id="IPR000994">
    <property type="entry name" value="Pept_M24"/>
</dbReference>
<dbReference type="InterPro" id="IPR001131">
    <property type="entry name" value="Peptidase_M24B_aminopep-P_CS"/>
</dbReference>
<dbReference type="InterPro" id="IPR052433">
    <property type="entry name" value="X-Pro_dipept-like"/>
</dbReference>
<dbReference type="PANTHER" id="PTHR43226">
    <property type="entry name" value="XAA-PRO AMINOPEPTIDASE 3"/>
    <property type="match status" value="1"/>
</dbReference>
<dbReference type="PANTHER" id="PTHR43226:SF4">
    <property type="entry name" value="XAA-PRO AMINOPEPTIDASE 3"/>
    <property type="match status" value="1"/>
</dbReference>
<dbReference type="Pfam" id="PF05195">
    <property type="entry name" value="AMP_N"/>
    <property type="match status" value="1"/>
</dbReference>
<dbReference type="Pfam" id="PF00557">
    <property type="entry name" value="Peptidase_M24"/>
    <property type="match status" value="1"/>
</dbReference>
<dbReference type="SMART" id="SM01011">
    <property type="entry name" value="AMP_N"/>
    <property type="match status" value="1"/>
</dbReference>
<dbReference type="SUPFAM" id="SSF55920">
    <property type="entry name" value="Creatinase/aminopeptidase"/>
    <property type="match status" value="1"/>
</dbReference>
<dbReference type="SUPFAM" id="SSF53092">
    <property type="entry name" value="Creatinase/prolidase N-terminal domain"/>
    <property type="match status" value="1"/>
</dbReference>
<dbReference type="PROSITE" id="PS00491">
    <property type="entry name" value="PROLINE_PEPTIDASE"/>
    <property type="match status" value="1"/>
</dbReference>
<protein>
    <recommendedName>
        <fullName>Xaa-Pro aminopeptidase 1</fullName>
        <ecNumber>3.4.11.9</ecNumber>
    </recommendedName>
    <alternativeName>
        <fullName>Aminoacylproline aminopeptidase I</fullName>
    </alternativeName>
    <alternativeName>
        <fullName>Aminopeptidase P I</fullName>
        <shortName>APP</shortName>
        <shortName>PEPP I</shortName>
    </alternativeName>
    <alternativeName>
        <fullName>X-Pro aminopeptidase I</fullName>
    </alternativeName>
    <alternativeName>
        <fullName>Xaa-Pro aminopeptidase I</fullName>
    </alternativeName>
</protein>